<evidence type="ECO:0000255" key="1">
    <source>
        <dbReference type="HAMAP-Rule" id="MF_00578"/>
    </source>
</evidence>
<feature type="chain" id="PRO_1000025169" description="Glutamate--cysteine ligase">
    <location>
        <begin position="1"/>
        <end position="518"/>
    </location>
</feature>
<dbReference type="EC" id="6.3.2.2" evidence="1"/>
<dbReference type="EMBL" id="CP000822">
    <property type="protein sequence ID" value="ABV15109.1"/>
    <property type="molecule type" value="Genomic_DNA"/>
</dbReference>
<dbReference type="RefSeq" id="WP_012134801.1">
    <property type="nucleotide sequence ID" value="NC_009792.1"/>
</dbReference>
<dbReference type="SMR" id="A8ANP6"/>
<dbReference type="STRING" id="290338.CKO_04038"/>
<dbReference type="GeneID" id="45137681"/>
<dbReference type="KEGG" id="cko:CKO_04038"/>
<dbReference type="HOGENOM" id="CLU_020728_3_0_6"/>
<dbReference type="OrthoDB" id="9803907at2"/>
<dbReference type="UniPathway" id="UPA00142">
    <property type="reaction ID" value="UER00209"/>
</dbReference>
<dbReference type="Proteomes" id="UP000008148">
    <property type="component" value="Chromosome"/>
</dbReference>
<dbReference type="GO" id="GO:0005829">
    <property type="term" value="C:cytosol"/>
    <property type="evidence" value="ECO:0007669"/>
    <property type="project" value="TreeGrafter"/>
</dbReference>
<dbReference type="GO" id="GO:0005524">
    <property type="term" value="F:ATP binding"/>
    <property type="evidence" value="ECO:0007669"/>
    <property type="project" value="UniProtKB-KW"/>
</dbReference>
<dbReference type="GO" id="GO:0004357">
    <property type="term" value="F:glutamate-cysteine ligase activity"/>
    <property type="evidence" value="ECO:0007669"/>
    <property type="project" value="UniProtKB-UniRule"/>
</dbReference>
<dbReference type="GO" id="GO:0046872">
    <property type="term" value="F:metal ion binding"/>
    <property type="evidence" value="ECO:0007669"/>
    <property type="project" value="TreeGrafter"/>
</dbReference>
<dbReference type="GO" id="GO:0006750">
    <property type="term" value="P:glutathione biosynthetic process"/>
    <property type="evidence" value="ECO:0007669"/>
    <property type="project" value="UniProtKB-UniRule"/>
</dbReference>
<dbReference type="FunFam" id="3.30.590.20:FF:000001">
    <property type="entry name" value="Glutamate--cysteine ligase"/>
    <property type="match status" value="1"/>
</dbReference>
<dbReference type="Gene3D" id="3.30.590.20">
    <property type="match status" value="1"/>
</dbReference>
<dbReference type="HAMAP" id="MF_00578">
    <property type="entry name" value="Glu_cys_ligase"/>
    <property type="match status" value="1"/>
</dbReference>
<dbReference type="InterPro" id="IPR014746">
    <property type="entry name" value="Gln_synth/guanido_kin_cat_dom"/>
</dbReference>
<dbReference type="InterPro" id="IPR007370">
    <property type="entry name" value="Glu_cys_ligase"/>
</dbReference>
<dbReference type="InterPro" id="IPR006334">
    <property type="entry name" value="Glut_cys_ligase"/>
</dbReference>
<dbReference type="NCBIfam" id="TIGR01434">
    <property type="entry name" value="glu_cys_ligase"/>
    <property type="match status" value="1"/>
</dbReference>
<dbReference type="PANTHER" id="PTHR38761">
    <property type="entry name" value="GLUTAMATE--CYSTEINE LIGASE"/>
    <property type="match status" value="1"/>
</dbReference>
<dbReference type="PANTHER" id="PTHR38761:SF1">
    <property type="entry name" value="GLUTAMATE--CYSTEINE LIGASE"/>
    <property type="match status" value="1"/>
</dbReference>
<dbReference type="Pfam" id="PF04262">
    <property type="entry name" value="Glu_cys_ligase"/>
    <property type="match status" value="1"/>
</dbReference>
<dbReference type="SUPFAM" id="SSF55931">
    <property type="entry name" value="Glutamine synthetase/guanido kinase"/>
    <property type="match status" value="1"/>
</dbReference>
<comment type="catalytic activity">
    <reaction evidence="1">
        <text>L-cysteine + L-glutamate + ATP = gamma-L-glutamyl-L-cysteine + ADP + phosphate + H(+)</text>
        <dbReference type="Rhea" id="RHEA:13285"/>
        <dbReference type="ChEBI" id="CHEBI:15378"/>
        <dbReference type="ChEBI" id="CHEBI:29985"/>
        <dbReference type="ChEBI" id="CHEBI:30616"/>
        <dbReference type="ChEBI" id="CHEBI:35235"/>
        <dbReference type="ChEBI" id="CHEBI:43474"/>
        <dbReference type="ChEBI" id="CHEBI:58173"/>
        <dbReference type="ChEBI" id="CHEBI:456216"/>
        <dbReference type="EC" id="6.3.2.2"/>
    </reaction>
</comment>
<comment type="pathway">
    <text evidence="1">Sulfur metabolism; glutathione biosynthesis; glutathione from L-cysteine and L-glutamate: step 1/2.</text>
</comment>
<comment type="similarity">
    <text evidence="1">Belongs to the glutamate--cysteine ligase type 1 family. Type 1 subfamily.</text>
</comment>
<keyword id="KW-0067">ATP-binding</keyword>
<keyword id="KW-0317">Glutathione biosynthesis</keyword>
<keyword id="KW-0436">Ligase</keyword>
<keyword id="KW-0547">Nucleotide-binding</keyword>
<keyword id="KW-1185">Reference proteome</keyword>
<protein>
    <recommendedName>
        <fullName evidence="1">Glutamate--cysteine ligase</fullName>
        <ecNumber evidence="1">6.3.2.2</ecNumber>
    </recommendedName>
    <alternativeName>
        <fullName evidence="1">Gamma-ECS</fullName>
        <shortName evidence="1">GCS</shortName>
    </alternativeName>
    <alternativeName>
        <fullName evidence="1">Gamma-glutamylcysteine synthetase</fullName>
    </alternativeName>
</protein>
<accession>A8ANP6</accession>
<gene>
    <name evidence="1" type="primary">gshA</name>
    <name type="ordered locus">CKO_04038</name>
</gene>
<proteinExistence type="inferred from homology"/>
<organism>
    <name type="scientific">Citrobacter koseri (strain ATCC BAA-895 / CDC 4225-83 / SGSC4696)</name>
    <dbReference type="NCBI Taxonomy" id="290338"/>
    <lineage>
        <taxon>Bacteria</taxon>
        <taxon>Pseudomonadati</taxon>
        <taxon>Pseudomonadota</taxon>
        <taxon>Gammaproteobacteria</taxon>
        <taxon>Enterobacterales</taxon>
        <taxon>Enterobacteriaceae</taxon>
        <taxon>Citrobacter</taxon>
    </lineage>
</organism>
<reference key="1">
    <citation type="submission" date="2007-08" db="EMBL/GenBank/DDBJ databases">
        <authorList>
            <consortium name="The Citrobacter koseri Genome Sequencing Project"/>
            <person name="McClelland M."/>
            <person name="Sanderson E.K."/>
            <person name="Porwollik S."/>
            <person name="Spieth J."/>
            <person name="Clifton W.S."/>
            <person name="Latreille P."/>
            <person name="Courtney L."/>
            <person name="Wang C."/>
            <person name="Pepin K."/>
            <person name="Bhonagiri V."/>
            <person name="Nash W."/>
            <person name="Johnson M."/>
            <person name="Thiruvilangam P."/>
            <person name="Wilson R."/>
        </authorList>
    </citation>
    <scope>NUCLEOTIDE SEQUENCE [LARGE SCALE GENOMIC DNA]</scope>
    <source>
        <strain>ATCC BAA-895 / CDC 4225-83 / SGSC4696</strain>
    </source>
</reference>
<sequence>MIPDVSQALTWLERHPQALKGIQRGLERETLRVNADGTLATTGHPDALGSALTHKWVTTDFAEALLEFITPVDGDIQHMLTLMRDLHRYTARNLGDERMWPLSMPCYIAEGQDIELAQYGTSNIGRLKTLYREGLKNRYGALMQTISGVHYNFSLPMAFWQAKCGVVDGEDAKEKISAGYFRLIRNYYRFGWVIPYLFGASPAICSSFLQGKPTTLPFEKTDCGMYYLPYATSLRLSDLGYTNKSQSNLGITFNDLHEYVAGLKRAIKTPSTEYAEIGLEKDGKRLQINSNVLQIENELYAPIRPKRVTRSGETPSDALLRGGIEYIEVRSLDINPFSPIGVDEQQVRFLDLFMVWCVLADAPEMSSDELLCTRTNWNRVILEGRKPGLTLGIGCETAQFPLPKVGKDLFRDLKRVAQTLDSIHGGEDYQKVCDELVACFDNPELTFSARILRSMIDTGIGGTGKALGEAYRNLLREEPLEILREEDFIAEREASTRRQLEVEAADTEPFDAWLEKHA</sequence>
<name>GSH1_CITK8</name>